<comment type="function">
    <text evidence="1">Catalyzes the folate-dependent formation of 5-methyl-uridine at position 54 (M-5-U54) in all tRNAs.</text>
</comment>
<comment type="catalytic activity">
    <reaction evidence="1">
        <text>uridine(54) in tRNA + (6R)-5,10-methylene-5,6,7,8-tetrahydrofolate + NADH + H(+) = 5-methyluridine(54) in tRNA + (6S)-5,6,7,8-tetrahydrofolate + NAD(+)</text>
        <dbReference type="Rhea" id="RHEA:16873"/>
        <dbReference type="Rhea" id="RHEA-COMP:10167"/>
        <dbReference type="Rhea" id="RHEA-COMP:10193"/>
        <dbReference type="ChEBI" id="CHEBI:15378"/>
        <dbReference type="ChEBI" id="CHEBI:15636"/>
        <dbReference type="ChEBI" id="CHEBI:57453"/>
        <dbReference type="ChEBI" id="CHEBI:57540"/>
        <dbReference type="ChEBI" id="CHEBI:57945"/>
        <dbReference type="ChEBI" id="CHEBI:65315"/>
        <dbReference type="ChEBI" id="CHEBI:74447"/>
        <dbReference type="EC" id="2.1.1.74"/>
    </reaction>
</comment>
<comment type="catalytic activity">
    <reaction evidence="1">
        <text>uridine(54) in tRNA + (6R)-5,10-methylene-5,6,7,8-tetrahydrofolate + NADPH + H(+) = 5-methyluridine(54) in tRNA + (6S)-5,6,7,8-tetrahydrofolate + NADP(+)</text>
        <dbReference type="Rhea" id="RHEA:62372"/>
        <dbReference type="Rhea" id="RHEA-COMP:10167"/>
        <dbReference type="Rhea" id="RHEA-COMP:10193"/>
        <dbReference type="ChEBI" id="CHEBI:15378"/>
        <dbReference type="ChEBI" id="CHEBI:15636"/>
        <dbReference type="ChEBI" id="CHEBI:57453"/>
        <dbReference type="ChEBI" id="CHEBI:57783"/>
        <dbReference type="ChEBI" id="CHEBI:58349"/>
        <dbReference type="ChEBI" id="CHEBI:65315"/>
        <dbReference type="ChEBI" id="CHEBI:74447"/>
        <dbReference type="EC" id="2.1.1.74"/>
    </reaction>
</comment>
<comment type="cofactor">
    <cofactor evidence="1">
        <name>FAD</name>
        <dbReference type="ChEBI" id="CHEBI:57692"/>
    </cofactor>
</comment>
<comment type="subcellular location">
    <subcellularLocation>
        <location evidence="1">Cytoplasm</location>
    </subcellularLocation>
</comment>
<comment type="similarity">
    <text evidence="1">Belongs to the MnmG family. TrmFO subfamily.</text>
</comment>
<organism>
    <name type="scientific">Hyphomonas neptunium (strain ATCC 15444)</name>
    <dbReference type="NCBI Taxonomy" id="228405"/>
    <lineage>
        <taxon>Bacteria</taxon>
        <taxon>Pseudomonadati</taxon>
        <taxon>Pseudomonadota</taxon>
        <taxon>Alphaproteobacteria</taxon>
        <taxon>Hyphomonadales</taxon>
        <taxon>Hyphomonadaceae</taxon>
        <taxon>Hyphomonas</taxon>
    </lineage>
</organism>
<accession>Q0BYJ6</accession>
<keyword id="KW-0963">Cytoplasm</keyword>
<keyword id="KW-0274">FAD</keyword>
<keyword id="KW-0285">Flavoprotein</keyword>
<keyword id="KW-0489">Methyltransferase</keyword>
<keyword id="KW-0520">NAD</keyword>
<keyword id="KW-0521">NADP</keyword>
<keyword id="KW-1185">Reference proteome</keyword>
<keyword id="KW-0808">Transferase</keyword>
<keyword id="KW-0819">tRNA processing</keyword>
<proteinExistence type="inferred from homology"/>
<protein>
    <recommendedName>
        <fullName evidence="1">Methylenetetrahydrofolate--tRNA-(uracil-5-)-methyltransferase TrmFO</fullName>
        <ecNumber evidence="1">2.1.1.74</ecNumber>
    </recommendedName>
    <alternativeName>
        <fullName evidence="1">Folate-dependent tRNA (uracil-5-)-methyltransferase</fullName>
    </alternativeName>
    <alternativeName>
        <fullName evidence="1">Folate-dependent tRNA(M-5-U54)-methyltransferase</fullName>
    </alternativeName>
</protein>
<dbReference type="EC" id="2.1.1.74" evidence="1"/>
<dbReference type="EMBL" id="CP000158">
    <property type="protein sequence ID" value="ABI75802.1"/>
    <property type="molecule type" value="Genomic_DNA"/>
</dbReference>
<dbReference type="RefSeq" id="WP_011647744.1">
    <property type="nucleotide sequence ID" value="NC_008358.1"/>
</dbReference>
<dbReference type="SMR" id="Q0BYJ6"/>
<dbReference type="STRING" id="228405.HNE_2768"/>
<dbReference type="KEGG" id="hne:HNE_2768"/>
<dbReference type="eggNOG" id="COG1206">
    <property type="taxonomic scope" value="Bacteria"/>
</dbReference>
<dbReference type="HOGENOM" id="CLU_033057_1_0_5"/>
<dbReference type="Proteomes" id="UP000001959">
    <property type="component" value="Chromosome"/>
</dbReference>
<dbReference type="GO" id="GO:0005829">
    <property type="term" value="C:cytosol"/>
    <property type="evidence" value="ECO:0007669"/>
    <property type="project" value="TreeGrafter"/>
</dbReference>
<dbReference type="GO" id="GO:0050660">
    <property type="term" value="F:flavin adenine dinucleotide binding"/>
    <property type="evidence" value="ECO:0007669"/>
    <property type="project" value="UniProtKB-UniRule"/>
</dbReference>
<dbReference type="GO" id="GO:0047151">
    <property type="term" value="F:tRNA (uracil(54)-C5)-methyltransferase activity, 5,10-methylenetetrahydrofolate-dependent"/>
    <property type="evidence" value="ECO:0007669"/>
    <property type="project" value="UniProtKB-UniRule"/>
</dbReference>
<dbReference type="GO" id="GO:0030488">
    <property type="term" value="P:tRNA methylation"/>
    <property type="evidence" value="ECO:0007669"/>
    <property type="project" value="TreeGrafter"/>
</dbReference>
<dbReference type="GO" id="GO:0002098">
    <property type="term" value="P:tRNA wobble uridine modification"/>
    <property type="evidence" value="ECO:0007669"/>
    <property type="project" value="TreeGrafter"/>
</dbReference>
<dbReference type="Gene3D" id="3.50.50.60">
    <property type="entry name" value="FAD/NAD(P)-binding domain"/>
    <property type="match status" value="2"/>
</dbReference>
<dbReference type="HAMAP" id="MF_01037">
    <property type="entry name" value="TrmFO"/>
    <property type="match status" value="1"/>
</dbReference>
<dbReference type="InterPro" id="IPR036188">
    <property type="entry name" value="FAD/NAD-bd_sf"/>
</dbReference>
<dbReference type="InterPro" id="IPR002218">
    <property type="entry name" value="MnmG-rel"/>
</dbReference>
<dbReference type="InterPro" id="IPR020595">
    <property type="entry name" value="MnmG-rel_CS"/>
</dbReference>
<dbReference type="InterPro" id="IPR040131">
    <property type="entry name" value="MnmG_N"/>
</dbReference>
<dbReference type="InterPro" id="IPR004417">
    <property type="entry name" value="TrmFO"/>
</dbReference>
<dbReference type="NCBIfam" id="TIGR00137">
    <property type="entry name" value="gid_trmFO"/>
    <property type="match status" value="1"/>
</dbReference>
<dbReference type="NCBIfam" id="NF003739">
    <property type="entry name" value="PRK05335.1"/>
    <property type="match status" value="1"/>
</dbReference>
<dbReference type="PANTHER" id="PTHR11806">
    <property type="entry name" value="GLUCOSE INHIBITED DIVISION PROTEIN A"/>
    <property type="match status" value="1"/>
</dbReference>
<dbReference type="PANTHER" id="PTHR11806:SF2">
    <property type="entry name" value="METHYLENETETRAHYDROFOLATE--TRNA-(URACIL-5-)-METHYLTRANSFERASE TRMFO"/>
    <property type="match status" value="1"/>
</dbReference>
<dbReference type="Pfam" id="PF01134">
    <property type="entry name" value="GIDA"/>
    <property type="match status" value="1"/>
</dbReference>
<dbReference type="SUPFAM" id="SSF51905">
    <property type="entry name" value="FAD/NAD(P)-binding domain"/>
    <property type="match status" value="1"/>
</dbReference>
<dbReference type="PROSITE" id="PS01281">
    <property type="entry name" value="GIDA_2"/>
    <property type="match status" value="1"/>
</dbReference>
<feature type="chain" id="PRO_0000346344" description="Methylenetetrahydrofolate--tRNA-(uracil-5-)-methyltransferase TrmFO">
    <location>
        <begin position="1"/>
        <end position="467"/>
    </location>
</feature>
<feature type="binding site" evidence="1">
    <location>
        <begin position="10"/>
        <end position="15"/>
    </location>
    <ligand>
        <name>FAD</name>
        <dbReference type="ChEBI" id="CHEBI:57692"/>
    </ligand>
</feature>
<reference key="1">
    <citation type="journal article" date="2006" name="J. Bacteriol.">
        <title>Comparative genomic evidence for a close relationship between the dimorphic prosthecate bacteria Hyphomonas neptunium and Caulobacter crescentus.</title>
        <authorList>
            <person name="Badger J.H."/>
            <person name="Hoover T.R."/>
            <person name="Brun Y.V."/>
            <person name="Weiner R.M."/>
            <person name="Laub M.T."/>
            <person name="Alexandre G."/>
            <person name="Mrazek J."/>
            <person name="Ren Q."/>
            <person name="Paulsen I.T."/>
            <person name="Nelson K.E."/>
            <person name="Khouri H.M."/>
            <person name="Radune D."/>
            <person name="Sosa J."/>
            <person name="Dodson R.J."/>
            <person name="Sullivan S.A."/>
            <person name="Rosovitz M.J."/>
            <person name="Madupu R."/>
            <person name="Brinkac L.M."/>
            <person name="Durkin A.S."/>
            <person name="Daugherty S.C."/>
            <person name="Kothari S.P."/>
            <person name="Giglio M.G."/>
            <person name="Zhou L."/>
            <person name="Haft D.H."/>
            <person name="Selengut J.D."/>
            <person name="Davidsen T.M."/>
            <person name="Yang Q."/>
            <person name="Zafar N."/>
            <person name="Ward N.L."/>
        </authorList>
    </citation>
    <scope>NUCLEOTIDE SEQUENCE [LARGE SCALE GENOMIC DNA]</scope>
    <source>
        <strain>ATCC 15444</strain>
    </source>
</reference>
<evidence type="ECO:0000255" key="1">
    <source>
        <dbReference type="HAMAP-Rule" id="MF_01037"/>
    </source>
</evidence>
<sequence length="467" mass="50980">MTLKPIHVIGGGMAGSEAAWQIASAGVPVILHEMRGVRGTDAHQTDKLAELVCSNSFRSDDHTTNAVGVIHEEMRRANGLIITTAKDHQVPAGSALAVDREGFSEAITAKLEAHPLVTIVREEIAGLPPEDWDSVIVATGPLTSIALAEAVRAHTGETDLAFFDAIAPIVYFESIDMDKAWRQSRYDKAGPSGDTAAYINCPMTEEQYNAFLDALLAAPKTEFRDWEKDTPYFEGCLPIEVMAERGRETLRFGPMKPVGLTNPHNPTVKAHAIVQLRQDNALGTLWNMVGFQTKLKYAAQTDIFRMIPGLEKAEFARLGGIHRNTFLNSPKLLDRQLRMKSMPRLRFAGQVTGVEGYVESAAMGLLAGRFAAAERLGQRLEPPPPTTAMGALISHITGGHLAEKQTFQPMNVNFGLFPDITDYSKTDENGKRLRGKDKGRAKKIAQAIRALQDFDAWLAGEAVVAAE</sequence>
<name>TRMFO_HYPNA</name>
<gene>
    <name evidence="1" type="primary">trmFO</name>
    <name type="ordered locus">HNE_2768</name>
</gene>